<name>ALDA_STAEQ</name>
<feature type="chain" id="PRO_0000056462" description="Putative aldehyde dehydrogenase AldA">
    <location>
        <begin position="1"/>
        <end position="497"/>
    </location>
</feature>
<feature type="active site" evidence="1">
    <location>
        <position position="257"/>
    </location>
</feature>
<feature type="active site" evidence="1">
    <location>
        <position position="291"/>
    </location>
</feature>
<feature type="binding site" evidence="1">
    <location>
        <begin position="213"/>
        <end position="219"/>
    </location>
    <ligand>
        <name>NAD(+)</name>
        <dbReference type="ChEBI" id="CHEBI:57540"/>
    </ligand>
</feature>
<reference key="1">
    <citation type="journal article" date="2005" name="J. Bacteriol.">
        <title>Insights on evolution of virulence and resistance from the complete genome analysis of an early methicillin-resistant Staphylococcus aureus strain and a biofilm-producing methicillin-resistant Staphylococcus epidermidis strain.</title>
        <authorList>
            <person name="Gill S.R."/>
            <person name="Fouts D.E."/>
            <person name="Archer G.L."/>
            <person name="Mongodin E.F."/>
            <person name="DeBoy R.T."/>
            <person name="Ravel J."/>
            <person name="Paulsen I.T."/>
            <person name="Kolonay J.F."/>
            <person name="Brinkac L.M."/>
            <person name="Beanan M.J."/>
            <person name="Dodson R.J."/>
            <person name="Daugherty S.C."/>
            <person name="Madupu R."/>
            <person name="Angiuoli S.V."/>
            <person name="Durkin A.S."/>
            <person name="Haft D.H."/>
            <person name="Vamathevan J.J."/>
            <person name="Khouri H."/>
            <person name="Utterback T.R."/>
            <person name="Lee C."/>
            <person name="Dimitrov G."/>
            <person name="Jiang L."/>
            <person name="Qin H."/>
            <person name="Weidman J."/>
            <person name="Tran K."/>
            <person name="Kang K.H."/>
            <person name="Hance I.R."/>
            <person name="Nelson K.E."/>
            <person name="Fraser C.M."/>
        </authorList>
    </citation>
    <scope>NUCLEOTIDE SEQUENCE [LARGE SCALE GENOMIC DNA]</scope>
    <source>
        <strain>ATCC 35984 / DSM 28319 / BCRC 17069 / CCUG 31568 / BM 3577 / RP62A</strain>
    </source>
</reference>
<sequence>MTNINVRNYIDESYGLFINNEFQASDSGETLTVSNPANGEDLAKVARAGKKDVDKAVQAAHDAFDSWSKISKEERADYLLEISRRIHEKTEHLATVESLQNGKPYRETSTIDVPQAANQFKYFASVLTTDEGSVNEIDQNTMSLVVNEPVGVVGAVVAWNFPILLASWKLGPALAAGNTVVIQPSSSTPLSLIELAKIFQEVLPKGVVNVLTGKGSESGDAIFHHEGVDKLSFTGSTDVGYGVAQAGAERIVPTTLELGGKSANIIFDDANLEQVIEGVQLGILFNQGEVCSAGSRLLVQSSIYDELLPKLKEAFENIKVGDPFDEDTKMSAQTGPEQLDKIESYIKIAEEDDKANILTGGHRITDNGLDKGYFFEPTIIEINDNKHQLAQEEIFGPVVVVEKFDDEQEAIEIANDSEYGLAGGIFTTDIHRALNVAKAMRTGRIWINTYNQIPAGAPFGGYKKSGIGREVYKDAIKNYQQVKNIFIDTSNQTKGLY</sequence>
<organism>
    <name type="scientific">Staphylococcus epidermidis (strain ATCC 35984 / DSM 28319 / BCRC 17069 / CCUG 31568 / BM 3577 / RP62A)</name>
    <dbReference type="NCBI Taxonomy" id="176279"/>
    <lineage>
        <taxon>Bacteria</taxon>
        <taxon>Bacillati</taxon>
        <taxon>Bacillota</taxon>
        <taxon>Bacilli</taxon>
        <taxon>Bacillales</taxon>
        <taxon>Staphylococcaceae</taxon>
        <taxon>Staphylococcus</taxon>
    </lineage>
</organism>
<keyword id="KW-0520">NAD</keyword>
<keyword id="KW-0560">Oxidoreductase</keyword>
<keyword id="KW-1185">Reference proteome</keyword>
<protein>
    <recommendedName>
        <fullName>Putative aldehyde dehydrogenase AldA</fullName>
        <ecNumber>1.2.1.3</ecNumber>
    </recommendedName>
</protein>
<accession>Q5HLA3</accession>
<evidence type="ECO:0000250" key="1"/>
<evidence type="ECO:0000305" key="2"/>
<proteinExistence type="inferred from homology"/>
<gene>
    <name type="primary">aldA</name>
    <name type="ordered locus">SERP2084</name>
</gene>
<comment type="catalytic activity">
    <reaction>
        <text>an aldehyde + NAD(+) + H2O = a carboxylate + NADH + 2 H(+)</text>
        <dbReference type="Rhea" id="RHEA:16185"/>
        <dbReference type="ChEBI" id="CHEBI:15377"/>
        <dbReference type="ChEBI" id="CHEBI:15378"/>
        <dbReference type="ChEBI" id="CHEBI:17478"/>
        <dbReference type="ChEBI" id="CHEBI:29067"/>
        <dbReference type="ChEBI" id="CHEBI:57540"/>
        <dbReference type="ChEBI" id="CHEBI:57945"/>
        <dbReference type="EC" id="1.2.1.3"/>
    </reaction>
</comment>
<comment type="similarity">
    <text evidence="2">Belongs to the aldehyde dehydrogenase family.</text>
</comment>
<dbReference type="EC" id="1.2.1.3"/>
<dbReference type="EMBL" id="CP000029">
    <property type="protein sequence ID" value="AAW52930.1"/>
    <property type="molecule type" value="Genomic_DNA"/>
</dbReference>
<dbReference type="RefSeq" id="WP_002438147.1">
    <property type="nucleotide sequence ID" value="NC_002976.3"/>
</dbReference>
<dbReference type="SMR" id="Q5HLA3"/>
<dbReference type="STRING" id="176279.SERP2084"/>
<dbReference type="KEGG" id="ser:SERP2084"/>
<dbReference type="eggNOG" id="COG1012">
    <property type="taxonomic scope" value="Bacteria"/>
</dbReference>
<dbReference type="HOGENOM" id="CLU_005391_0_0_9"/>
<dbReference type="Proteomes" id="UP000000531">
    <property type="component" value="Chromosome"/>
</dbReference>
<dbReference type="GO" id="GO:0004029">
    <property type="term" value="F:aldehyde dehydrogenase (NAD+) activity"/>
    <property type="evidence" value="ECO:0007669"/>
    <property type="project" value="UniProtKB-EC"/>
</dbReference>
<dbReference type="FunFam" id="3.40.309.10:FF:000012">
    <property type="entry name" value="Betaine aldehyde dehydrogenase"/>
    <property type="match status" value="1"/>
</dbReference>
<dbReference type="FunFam" id="3.40.605.10:FF:000007">
    <property type="entry name" value="NAD/NADP-dependent betaine aldehyde dehydrogenase"/>
    <property type="match status" value="1"/>
</dbReference>
<dbReference type="Gene3D" id="3.40.605.10">
    <property type="entry name" value="Aldehyde Dehydrogenase, Chain A, domain 1"/>
    <property type="match status" value="1"/>
</dbReference>
<dbReference type="Gene3D" id="3.40.309.10">
    <property type="entry name" value="Aldehyde Dehydrogenase, Chain A, domain 2"/>
    <property type="match status" value="1"/>
</dbReference>
<dbReference type="InterPro" id="IPR016161">
    <property type="entry name" value="Ald_DH/histidinol_DH"/>
</dbReference>
<dbReference type="InterPro" id="IPR016163">
    <property type="entry name" value="Ald_DH_C"/>
</dbReference>
<dbReference type="InterPro" id="IPR016160">
    <property type="entry name" value="Ald_DH_CS_CYS"/>
</dbReference>
<dbReference type="InterPro" id="IPR029510">
    <property type="entry name" value="Ald_DH_CS_GLU"/>
</dbReference>
<dbReference type="InterPro" id="IPR016162">
    <property type="entry name" value="Ald_DH_N"/>
</dbReference>
<dbReference type="InterPro" id="IPR015590">
    <property type="entry name" value="Aldehyde_DH_dom"/>
</dbReference>
<dbReference type="PANTHER" id="PTHR11699">
    <property type="entry name" value="ALDEHYDE DEHYDROGENASE-RELATED"/>
    <property type="match status" value="1"/>
</dbReference>
<dbReference type="Pfam" id="PF00171">
    <property type="entry name" value="Aldedh"/>
    <property type="match status" value="1"/>
</dbReference>
<dbReference type="SUPFAM" id="SSF53720">
    <property type="entry name" value="ALDH-like"/>
    <property type="match status" value="1"/>
</dbReference>
<dbReference type="PROSITE" id="PS00070">
    <property type="entry name" value="ALDEHYDE_DEHYDR_CYS"/>
    <property type="match status" value="1"/>
</dbReference>
<dbReference type="PROSITE" id="PS00687">
    <property type="entry name" value="ALDEHYDE_DEHYDR_GLU"/>
    <property type="match status" value="1"/>
</dbReference>